<gene>
    <name type="primary">prp12</name>
    <name type="synonym">sap130</name>
    <name type="ORF">SPAPJ698.03c</name>
</gene>
<sequence>MDTFPSLFLYSLTIQNSNYVQSSCAASLSGKKAQEIVIATESRLLIYKVDATDGRMNCILNQNCFGIIRNVAPLRLTGFKRDYLVVTSDSGRITILEYNVEKNKLVPIYQETFGKSGIRRVVPGEYLAIDAKGRAAMIASVEKNKLVYVLNRDSEANLTISSPLEAHKANNICFHLIGLDTGYANPIFAALEVDYSEIDHDSTREAFTSSEKVLSYYELDLGLNHVVKRWSKVVDRNSYMLIPVPGGNDGPSGTLVISNGWISYRHLQKAFHQIPILRRQAASANAISTPWNQVNSNSANDGPLIVSAVLHKMKGSFFYLLQTGDGDLLKLTIEHDGQGNVVELRLKYFDTVPLAVQLNILKTGFLFVATEFGNHQLYQFENLGIDDDELEITSLDFQAQDNEVGTKNVHFGVRGLQNLSLVEEIPSLYSLTDTLLMKAPSSGEANQLYTVCGRGSNSSLRQLRRGLETTEIVASELPGAPIAIWTLKLNQTDVYDSYIILSFTNGTLVLSIGETVEEISDSGFLSSVSTLNARQMGRDSLVQIHPKGIRYIRANKQTSEWKLPQDVYVVQSAINDMQIVVALSNGELVYFEMSDDVEGGQLNEYQERKTLTANVTSLALGPVQEGSRRSNFMCLACDDATVRVLSLDLYTTLENLSVQALSSPANSLCIIPMNVNGVSTLYLHIGLMNGVYLRTVIDVTSGQLLDTRTRFLGPRAVKIYPITMKNQNTVLAVSSRTFLAYSYQQNLQLSPIAYSAIDHASSFASEQCPEGIVAIQKNTLKIFTVDSLQDDLKSDIYPLICTPRKIVKHPNFPVLYILQSERNFDSFKYAQENGDVGSSYTKEKQNEHTSKSWVSFISVFDMISKKIIHESPLGDNEAAFSMTAAFFKNRDEFFLVAGSATNMDLECRTCSHGNFRVYRFHDEGKKLELISHTEIDGIPMALTPFQGRMLAGVGRFLRIYDLGNKKMLRKGELSAVPLFITHITVQASRIVVADSQYSVRFVVYKPEDNHLLTFADDTIHRWTTTNVLVDYDTLAGGDKFGNIWLLRCPEHVSKLADEENSESKLIHEKPFLNSTPHKLDLMAHFFTNDIPTSLQKVQLVEGAREVLLWTGLLGTVGVFTPFINQEDVRFFQQLEFLLRKECPPLAGRDHLAYRSYYAPVKCVIDGDLCEMYYSLPHPVQEMIANELDRTIAEVSKKIEDFRVRSF</sequence>
<organism>
    <name type="scientific">Schizosaccharomyces pombe (strain 972 / ATCC 24843)</name>
    <name type="common">Fission yeast</name>
    <dbReference type="NCBI Taxonomy" id="284812"/>
    <lineage>
        <taxon>Eukaryota</taxon>
        <taxon>Fungi</taxon>
        <taxon>Dikarya</taxon>
        <taxon>Ascomycota</taxon>
        <taxon>Taphrinomycotina</taxon>
        <taxon>Schizosaccharomycetes</taxon>
        <taxon>Schizosaccharomycetales</taxon>
        <taxon>Schizosaccharomycetaceae</taxon>
        <taxon>Schizosaccharomyces</taxon>
    </lineage>
</organism>
<name>RSE1_SCHPO</name>
<keyword id="KW-0507">mRNA processing</keyword>
<keyword id="KW-0508">mRNA splicing</keyword>
<keyword id="KW-0539">Nucleus</keyword>
<keyword id="KW-1185">Reference proteome</keyword>
<keyword id="KW-0747">Spliceosome</keyword>
<protein>
    <recommendedName>
        <fullName>Pre-mRNA-splicing factor prp12</fullName>
    </recommendedName>
    <alternativeName>
        <fullName>Pre-mRNA-processing protein 12</fullName>
    </alternativeName>
    <alternativeName>
        <fullName>Spliceosome-associated protein 130</fullName>
    </alternativeName>
</protein>
<proteinExistence type="evidence at protein level"/>
<reference key="1">
    <citation type="journal article" date="2001" name="RNA">
        <title>Mutation in the prp12+ gene encoding a homolog of SAP130/SF3b130 causes differential inhibition of pre-mRNA splicing and arrest of cell-cycle progression in Schizosaccharomyces pombe.</title>
        <authorList>
            <person name="Habara Y."/>
            <person name="Urushiyama S."/>
            <person name="Shibuya T."/>
            <person name="Ohshima Y."/>
            <person name="Tani T."/>
        </authorList>
    </citation>
    <scope>NUCLEOTIDE SEQUENCE [GENOMIC DNA]</scope>
    <scope>FUNCTION</scope>
    <scope>SUBCELLULAR LOCATION</scope>
</reference>
<reference key="2">
    <citation type="journal article" date="2002" name="Nature">
        <title>The genome sequence of Schizosaccharomyces pombe.</title>
        <authorList>
            <person name="Wood V."/>
            <person name="Gwilliam R."/>
            <person name="Rajandream M.A."/>
            <person name="Lyne M.H."/>
            <person name="Lyne R."/>
            <person name="Stewart A."/>
            <person name="Sgouros J.G."/>
            <person name="Peat N."/>
            <person name="Hayles J."/>
            <person name="Baker S.G."/>
            <person name="Basham D."/>
            <person name="Bowman S."/>
            <person name="Brooks K."/>
            <person name="Brown D."/>
            <person name="Brown S."/>
            <person name="Chillingworth T."/>
            <person name="Churcher C.M."/>
            <person name="Collins M."/>
            <person name="Connor R."/>
            <person name="Cronin A."/>
            <person name="Davis P."/>
            <person name="Feltwell T."/>
            <person name="Fraser A."/>
            <person name="Gentles S."/>
            <person name="Goble A."/>
            <person name="Hamlin N."/>
            <person name="Harris D.E."/>
            <person name="Hidalgo J."/>
            <person name="Hodgson G."/>
            <person name="Holroyd S."/>
            <person name="Hornsby T."/>
            <person name="Howarth S."/>
            <person name="Huckle E.J."/>
            <person name="Hunt S."/>
            <person name="Jagels K."/>
            <person name="James K.D."/>
            <person name="Jones L."/>
            <person name="Jones M."/>
            <person name="Leather S."/>
            <person name="McDonald S."/>
            <person name="McLean J."/>
            <person name="Mooney P."/>
            <person name="Moule S."/>
            <person name="Mungall K.L."/>
            <person name="Murphy L.D."/>
            <person name="Niblett D."/>
            <person name="Odell C."/>
            <person name="Oliver K."/>
            <person name="O'Neil S."/>
            <person name="Pearson D."/>
            <person name="Quail M.A."/>
            <person name="Rabbinowitsch E."/>
            <person name="Rutherford K.M."/>
            <person name="Rutter S."/>
            <person name="Saunders D."/>
            <person name="Seeger K."/>
            <person name="Sharp S."/>
            <person name="Skelton J."/>
            <person name="Simmonds M.N."/>
            <person name="Squares R."/>
            <person name="Squares S."/>
            <person name="Stevens K."/>
            <person name="Taylor K."/>
            <person name="Taylor R.G."/>
            <person name="Tivey A."/>
            <person name="Walsh S.V."/>
            <person name="Warren T."/>
            <person name="Whitehead S."/>
            <person name="Woodward J.R."/>
            <person name="Volckaert G."/>
            <person name="Aert R."/>
            <person name="Robben J."/>
            <person name="Grymonprez B."/>
            <person name="Weltjens I."/>
            <person name="Vanstreels E."/>
            <person name="Rieger M."/>
            <person name="Schaefer M."/>
            <person name="Mueller-Auer S."/>
            <person name="Gabel C."/>
            <person name="Fuchs M."/>
            <person name="Duesterhoeft A."/>
            <person name="Fritzc C."/>
            <person name="Holzer E."/>
            <person name="Moestl D."/>
            <person name="Hilbert H."/>
            <person name="Borzym K."/>
            <person name="Langer I."/>
            <person name="Beck A."/>
            <person name="Lehrach H."/>
            <person name="Reinhardt R."/>
            <person name="Pohl T.M."/>
            <person name="Eger P."/>
            <person name="Zimmermann W."/>
            <person name="Wedler H."/>
            <person name="Wambutt R."/>
            <person name="Purnelle B."/>
            <person name="Goffeau A."/>
            <person name="Cadieu E."/>
            <person name="Dreano S."/>
            <person name="Gloux S."/>
            <person name="Lelaure V."/>
            <person name="Mottier S."/>
            <person name="Galibert F."/>
            <person name="Aves S.J."/>
            <person name="Xiang Z."/>
            <person name="Hunt C."/>
            <person name="Moore K."/>
            <person name="Hurst S.M."/>
            <person name="Lucas M."/>
            <person name="Rochet M."/>
            <person name="Gaillardin C."/>
            <person name="Tallada V.A."/>
            <person name="Garzon A."/>
            <person name="Thode G."/>
            <person name="Daga R.R."/>
            <person name="Cruzado L."/>
            <person name="Jimenez J."/>
            <person name="Sanchez M."/>
            <person name="del Rey F."/>
            <person name="Benito J."/>
            <person name="Dominguez A."/>
            <person name="Revuelta J.L."/>
            <person name="Moreno S."/>
            <person name="Armstrong J."/>
            <person name="Forsburg S.L."/>
            <person name="Cerutti L."/>
            <person name="Lowe T."/>
            <person name="McCombie W.R."/>
            <person name="Paulsen I."/>
            <person name="Potashkin J."/>
            <person name="Shpakovski G.V."/>
            <person name="Ussery D."/>
            <person name="Barrell B.G."/>
            <person name="Nurse P."/>
        </authorList>
    </citation>
    <scope>NUCLEOTIDE SEQUENCE [LARGE SCALE GENOMIC DNA]</scope>
    <source>
        <strain>972 / ATCC 24843</strain>
    </source>
</reference>
<reference key="3">
    <citation type="journal article" date="1996" name="Mol. Gen. Genet.">
        <title>Isolation of novel pre-mRNA splicing mutants of Schizosaccharomyces pombe.</title>
        <authorList>
            <person name="Urushiyama S."/>
            <person name="Tani T."/>
            <person name="Ohshima Y."/>
        </authorList>
    </citation>
    <scope>FUNCTION</scope>
</reference>
<reference key="4">
    <citation type="journal article" date="2002" name="Mol. Cell. Biol.">
        <title>Proteomics analysis reveals stable multiprotein complexes in both fission and budding yeasts containing Myb-related Cdc5p/Cef1p, novel pre-mRNA splicing factors, and snRNAs.</title>
        <authorList>
            <person name="Ohi M.D."/>
            <person name="Link A.J."/>
            <person name="Ren L."/>
            <person name="Jennings J.L."/>
            <person name="McDonald W.H."/>
            <person name="Gould K.L."/>
        </authorList>
    </citation>
    <scope>IDENTIFICATION IN THE CWF COMPLEX</scope>
    <scope>IDENTIFICATION BY MASS SPECTROMETRY</scope>
</reference>
<dbReference type="EMBL" id="AB034966">
    <property type="protein sequence ID" value="BAA86918.1"/>
    <property type="molecule type" value="Genomic_DNA"/>
</dbReference>
<dbReference type="EMBL" id="CU329670">
    <property type="protein sequence ID" value="CAB92100.1"/>
    <property type="molecule type" value="Genomic_DNA"/>
</dbReference>
<dbReference type="RefSeq" id="NP_594414.1">
    <property type="nucleotide sequence ID" value="NM_001019844.2"/>
</dbReference>
<dbReference type="SMR" id="Q9UTT2"/>
<dbReference type="BioGRID" id="279706">
    <property type="interactions" value="25"/>
</dbReference>
<dbReference type="FunCoup" id="Q9UTT2">
    <property type="interactions" value="1415"/>
</dbReference>
<dbReference type="IntAct" id="Q9UTT2">
    <property type="interactions" value="4"/>
</dbReference>
<dbReference type="STRING" id="284812.Q9UTT2"/>
<dbReference type="iPTMnet" id="Q9UTT2"/>
<dbReference type="PaxDb" id="4896-SPAPJ698.03c.1"/>
<dbReference type="EnsemblFungi" id="SPAPJ698.03c.1">
    <property type="protein sequence ID" value="SPAPJ698.03c.1:pep"/>
    <property type="gene ID" value="SPAPJ698.03c"/>
</dbReference>
<dbReference type="GeneID" id="2543278"/>
<dbReference type="KEGG" id="spo:2543278"/>
<dbReference type="PomBase" id="SPAPJ698.03c">
    <property type="gene designation" value="prp12"/>
</dbReference>
<dbReference type="VEuPathDB" id="FungiDB:SPAPJ698.03c"/>
<dbReference type="eggNOG" id="KOG1898">
    <property type="taxonomic scope" value="Eukaryota"/>
</dbReference>
<dbReference type="HOGENOM" id="CLU_003246_0_0_1"/>
<dbReference type="InParanoid" id="Q9UTT2"/>
<dbReference type="OMA" id="PRATGHW"/>
<dbReference type="PhylomeDB" id="Q9UTT2"/>
<dbReference type="PRO" id="PR:Q9UTT2"/>
<dbReference type="Proteomes" id="UP000002485">
    <property type="component" value="Chromosome I"/>
</dbReference>
<dbReference type="GO" id="GO:0005634">
    <property type="term" value="C:nucleus"/>
    <property type="evidence" value="ECO:0000314"/>
    <property type="project" value="PomBase"/>
</dbReference>
<dbReference type="GO" id="GO:0005686">
    <property type="term" value="C:U2 snRNP"/>
    <property type="evidence" value="ECO:0000314"/>
    <property type="project" value="PomBase"/>
</dbReference>
<dbReference type="GO" id="GO:0071004">
    <property type="term" value="C:U2-type prespliceosome"/>
    <property type="evidence" value="ECO:0000266"/>
    <property type="project" value="PomBase"/>
</dbReference>
<dbReference type="GO" id="GO:0030620">
    <property type="term" value="F:U2 snRNA binding"/>
    <property type="evidence" value="ECO:0000318"/>
    <property type="project" value="GO_Central"/>
</dbReference>
<dbReference type="GO" id="GO:0045292">
    <property type="term" value="P:mRNA cis splicing, via spliceosome"/>
    <property type="evidence" value="ECO:0000315"/>
    <property type="project" value="PomBase"/>
</dbReference>
<dbReference type="GO" id="GO:0000398">
    <property type="term" value="P:mRNA splicing, via spliceosome"/>
    <property type="evidence" value="ECO:0000318"/>
    <property type="project" value="GO_Central"/>
</dbReference>
<dbReference type="GO" id="GO:0000245">
    <property type="term" value="P:spliceosomal complex assembly"/>
    <property type="evidence" value="ECO:0000266"/>
    <property type="project" value="PomBase"/>
</dbReference>
<dbReference type="FunFam" id="2.130.10.10:FF:001143">
    <property type="entry name" value="Pre-mRNA-splicing factor rse-1, putative"/>
    <property type="match status" value="1"/>
</dbReference>
<dbReference type="FunFam" id="2.130.10.10:FF:000031">
    <property type="entry name" value="Splicing factor 3b subunit 3"/>
    <property type="match status" value="1"/>
</dbReference>
<dbReference type="Gene3D" id="2.130.10.10">
    <property type="entry name" value="YVTN repeat-like/Quinoprotein amine dehydrogenase"/>
    <property type="match status" value="3"/>
</dbReference>
<dbReference type="InterPro" id="IPR018846">
    <property type="entry name" value="Beta-prop_RSE1/DDB1/CPSF1_1st"/>
</dbReference>
<dbReference type="InterPro" id="IPR004871">
    <property type="entry name" value="Cleavage/polyA-sp_fac_asu_C"/>
</dbReference>
<dbReference type="InterPro" id="IPR050358">
    <property type="entry name" value="RSE1/DDB1/CFT1/CPSF1"/>
</dbReference>
<dbReference type="InterPro" id="IPR015943">
    <property type="entry name" value="WD40/YVTN_repeat-like_dom_sf"/>
</dbReference>
<dbReference type="InterPro" id="IPR036322">
    <property type="entry name" value="WD40_repeat_dom_sf"/>
</dbReference>
<dbReference type="PANTHER" id="PTHR10644">
    <property type="entry name" value="DNA REPAIR/RNA PROCESSING CPSF FAMILY"/>
    <property type="match status" value="1"/>
</dbReference>
<dbReference type="Pfam" id="PF10433">
    <property type="entry name" value="Beta-prop_RSE1_1st"/>
    <property type="match status" value="1"/>
</dbReference>
<dbReference type="Pfam" id="PF23726">
    <property type="entry name" value="Beta-prop_RSE1_2nd"/>
    <property type="match status" value="1"/>
</dbReference>
<dbReference type="Pfam" id="PF03178">
    <property type="entry name" value="CPSF_A"/>
    <property type="match status" value="1"/>
</dbReference>
<dbReference type="SUPFAM" id="SSF50978">
    <property type="entry name" value="WD40 repeat-like"/>
    <property type="match status" value="1"/>
</dbReference>
<evidence type="ECO:0000269" key="1">
    <source>
    </source>
</evidence>
<evidence type="ECO:0000269" key="2">
    <source>
    </source>
</evidence>
<evidence type="ECO:0000269" key="3">
    <source>
    </source>
</evidence>
<evidence type="ECO:0000305" key="4"/>
<comment type="function">
    <text evidence="1 3">Involved in mRNA splicing and G2/M transition.</text>
</comment>
<comment type="subunit">
    <text evidence="2">Belongs to the 40S cdc5-associated complex (or cwf complex), a spliceosome sub-complex reminiscent of a late-stage spliceosome composed of the U2, U5 and U6 snRNAs and at least brr2, cdc5, cwf2/prp3, cwf3/syf1, cwf4/syf3, cwf5/ecm2, spp42/cwf6, cwf7/spf27, cwf8, cwf9, cwf10, cwf11, cwf12, prp45/cwf13, cwf14, cwf15, cwf16, cwf17, cwf18, cwf19, cwf20, cwf21, cwf22, cwf23, cwf24, cwf25, cwf26, cyp7/cwf27, cwf28, cwf29/ist3, lea1, msl1, prp5/cwf1, prp10, prp12/sap130, prp17, prp22, sap61, sap62, sap114, sap145, slu7, smb1, smd1, smd3, smf1, smg1 and syf2.</text>
</comment>
<comment type="subcellular location">
    <subcellularLocation>
        <location evidence="1">Nucleus</location>
    </subcellularLocation>
</comment>
<comment type="similarity">
    <text evidence="4">Belongs to the RSE1 family.</text>
</comment>
<feature type="chain" id="PRO_0000218635" description="Pre-mRNA-splicing factor prp12">
    <location>
        <begin position="1"/>
        <end position="1206"/>
    </location>
</feature>
<accession>Q9UTT2</accession>